<name>FGD2_HUMAN</name>
<feature type="chain" id="PRO_0000080942" description="FYVE, RhoGEF and PH domain-containing protein 2">
    <location>
        <begin position="1"/>
        <end position="655"/>
    </location>
</feature>
<feature type="domain" description="DH" evidence="3">
    <location>
        <begin position="102"/>
        <end position="290"/>
    </location>
</feature>
<feature type="domain" description="PH 1" evidence="5">
    <location>
        <begin position="319"/>
        <end position="418"/>
    </location>
</feature>
<feature type="domain" description="PH 2" evidence="5">
    <location>
        <begin position="544"/>
        <end position="641"/>
    </location>
</feature>
<feature type="zinc finger region" description="FYVE-type" evidence="4">
    <location>
        <begin position="458"/>
        <end position="518"/>
    </location>
</feature>
<feature type="region of interest" description="Disordered" evidence="6">
    <location>
        <begin position="18"/>
        <end position="64"/>
    </location>
</feature>
<feature type="compositionally biased region" description="Basic and acidic residues" evidence="6">
    <location>
        <begin position="32"/>
        <end position="56"/>
    </location>
</feature>
<feature type="binding site" evidence="4">
    <location>
        <position position="464"/>
    </location>
    <ligand>
        <name>Zn(2+)</name>
        <dbReference type="ChEBI" id="CHEBI:29105"/>
        <label>1</label>
    </ligand>
</feature>
<feature type="binding site" evidence="4">
    <location>
        <position position="467"/>
    </location>
    <ligand>
        <name>Zn(2+)</name>
        <dbReference type="ChEBI" id="CHEBI:29105"/>
        <label>1</label>
    </ligand>
</feature>
<feature type="binding site" evidence="4">
    <location>
        <position position="481"/>
    </location>
    <ligand>
        <name>Zn(2+)</name>
        <dbReference type="ChEBI" id="CHEBI:29105"/>
        <label>2</label>
    </ligand>
</feature>
<feature type="binding site" evidence="4">
    <location>
        <position position="484"/>
    </location>
    <ligand>
        <name>Zn(2+)</name>
        <dbReference type="ChEBI" id="CHEBI:29105"/>
        <label>2</label>
    </ligand>
</feature>
<feature type="binding site" evidence="4">
    <location>
        <position position="489"/>
    </location>
    <ligand>
        <name>Zn(2+)</name>
        <dbReference type="ChEBI" id="CHEBI:29105"/>
        <label>1</label>
    </ligand>
</feature>
<feature type="binding site" evidence="4">
    <location>
        <position position="492"/>
    </location>
    <ligand>
        <name>Zn(2+)</name>
        <dbReference type="ChEBI" id="CHEBI:29105"/>
        <label>1</label>
    </ligand>
</feature>
<feature type="binding site" evidence="4">
    <location>
        <position position="510"/>
    </location>
    <ligand>
        <name>Zn(2+)</name>
        <dbReference type="ChEBI" id="CHEBI:29105"/>
        <label>2</label>
    </ligand>
</feature>
<feature type="binding site" evidence="4">
    <location>
        <position position="513"/>
    </location>
    <ligand>
        <name>Zn(2+)</name>
        <dbReference type="ChEBI" id="CHEBI:29105"/>
        <label>2</label>
    </ligand>
</feature>
<feature type="modified residue" description="Phosphoserine" evidence="2">
    <location>
        <position position="11"/>
    </location>
</feature>
<feature type="modified residue" description="Phosphoserine" evidence="2">
    <location>
        <position position="48"/>
    </location>
</feature>
<feature type="modified residue" description="Phosphoserine" evidence="11">
    <location>
        <position position="654"/>
    </location>
</feature>
<feature type="splice variant" id="VSP_013065" description="In isoform 2." evidence="9">
    <location>
        <begin position="1"/>
        <end position="423"/>
    </location>
</feature>
<feature type="splice variant" id="VSP_013066" description="In isoform 3." evidence="9">
    <location>
        <begin position="1"/>
        <end position="372"/>
    </location>
</feature>
<feature type="splice variant" id="VSP_013067" description="In isoform 4." evidence="8">
    <original>MKGASEEKLASVSNLVTVFENS</original>
    <variation>MFPKKARHPGAPALGICTRQPKSTPGTCCCFPCSPGRKPSGLSLLL</variation>
    <location>
        <begin position="1"/>
        <end position="22"/>
    </location>
</feature>
<feature type="splice variant" id="VSP_013068" description="In isoform 4." evidence="8">
    <original>EPEK</original>
    <variation>VPEG</variation>
    <location>
        <begin position="101"/>
        <end position="104"/>
    </location>
</feature>
<feature type="splice variant" id="VSP_038219" description="In isoform 4." evidence="8">
    <location>
        <begin position="105"/>
        <end position="655"/>
    </location>
</feature>
<feature type="splice variant" id="VSP_013070" description="In isoform 2." evidence="9">
    <original>NETFKAAAQGPEGDIQEQE</original>
    <variation>MGGRRSPRAHSCPTPLNPQ</variation>
    <location>
        <begin position="424"/>
        <end position="442"/>
    </location>
</feature>
<feature type="splice variant" id="VSP_013071" description="In isoform 3." evidence="9">
    <original>VCARCSDYRAELKYDDNRPNRVCLHCYAFLTGNVLPEAKEDKRRGILEKGSSATPDQSLMCSFLQLIGDKWGKSGPRGWCVIPRDDPLVLYVYAAPQDMRAHTSIPLLGYQVTVGPQGDPRVFQLQQSGQLYTFKAETEELKGRWVKAMERAASGWSPSWPNDGDLSD</original>
    <variation>STPASTPASTCVTQASTCITQASTFPT</variation>
    <location>
        <begin position="488"/>
        <end position="655"/>
    </location>
</feature>
<feature type="splice variant" id="VSP_013072" description="In isoform 2." evidence="9">
    <original>DMRAHTSIPLLGYQVTVGPQGDPRVFQLQQSGQLYTFKAETEELKGRWVKAMERAASGWSPSWPNDGDLSD</original>
    <variation>VRPPPARPPSGPGLPTACV</variation>
    <location>
        <begin position="585"/>
        <end position="655"/>
    </location>
</feature>
<feature type="sequence variant" id="VAR_021491" description="In dbSNP:rs831510." evidence="7">
    <original>Q</original>
    <variation>H</variation>
    <location>
        <position position="32"/>
    </location>
</feature>
<accession>Q7Z6J4</accession>
<accession>Q5T8I1</accession>
<accession>Q6P6A8</accession>
<accession>Q6ZNL5</accession>
<accession>Q8IZ32</accession>
<accession>Q8N868</accession>
<accession>Q9H7M2</accession>
<sequence>MKGASEEKLASVSNLVTVFENSRTPEAAPRGQRLEDVHHRPECRPPESPGPREKTNVGEAVGSEPRTVSRRYLNSLKNKLSSEAWRKSCQPVTLSGSGTQEPEKKIVQELLETEQAYVARLHLLDQVFFQELLKTARSSKAFPEDVVRVIFSNISSIYQFHSQFFLPELQRRLDDWTANPRIGDVIQKLAPFLKMYSEYVKNFERAAELLATWTDKSPLFQEVLTRIQSSEASGSLTLQHHMLEPVQRIPRYELLLKEYIQKLPAQAPDQADAQKALDMIFSAAQHSNAAITEMERLQDLWEVYQRLGLEDDIVDPSNTLLREGPVLKISFRRNDPMERYLFLFNNMLLYCVPRVIQVGAQFQVRTRIDVAGMKVRELMDAEFPHSFLVSGKQRTLELQARSQEEMISWMQAFQAAIDQIEKRNETFKAAAQGPEGDIQEQELQSEELGLRAPQWVRDKMVTMCMRCQEPFNALTRRRHHCRACGYVVCARCSDYRAELKYDDNRPNRVCLHCYAFLTGNVLPEAKEDKRRGILEKGSSATPDQSLMCSFLQLIGDKWGKSGPRGWCVIPRDDPLVLYVYAAPQDMRAHTSIPLLGYQVTVGPQGDPRVFQLQQSGQLYTFKAETEELKGRWVKAMERAASGWSPSWPNDGDLSD</sequence>
<protein>
    <recommendedName>
        <fullName>FYVE, RhoGEF and PH domain-containing protein 2</fullName>
    </recommendedName>
    <alternativeName>
        <fullName>Zinc finger FYVE domain-containing protein 4</fullName>
    </alternativeName>
</protein>
<evidence type="ECO:0000250" key="1"/>
<evidence type="ECO:0000250" key="2">
    <source>
        <dbReference type="UniProtKB" id="Q8BY35"/>
    </source>
</evidence>
<evidence type="ECO:0000255" key="3">
    <source>
        <dbReference type="PROSITE-ProRule" id="PRU00062"/>
    </source>
</evidence>
<evidence type="ECO:0000255" key="4">
    <source>
        <dbReference type="PROSITE-ProRule" id="PRU00091"/>
    </source>
</evidence>
<evidence type="ECO:0000255" key="5">
    <source>
        <dbReference type="PROSITE-ProRule" id="PRU00145"/>
    </source>
</evidence>
<evidence type="ECO:0000256" key="6">
    <source>
        <dbReference type="SAM" id="MobiDB-lite"/>
    </source>
</evidence>
<evidence type="ECO:0000269" key="7">
    <source>
    </source>
</evidence>
<evidence type="ECO:0000303" key="8">
    <source>
    </source>
</evidence>
<evidence type="ECO:0000303" key="9">
    <source>
    </source>
</evidence>
<evidence type="ECO:0000305" key="10"/>
<evidence type="ECO:0007744" key="11">
    <source>
    </source>
</evidence>
<comment type="function">
    <text evidence="1">Activates CDC42, a member of the Ras-like family of Rho- and Rac proteins, by exchanging bound GDP for free GTP. Activates JNK1 via CDC42 but not RAC1. Binds to phosphatidylinositol 4,5-bisphosphate, phosphatidylinositol 3,4,5-trisphosphate, phosphatidylinositol 5-monophosphate, phosphatidylinositol 4-monophosphate and phosphatidylinositol 3-monophosphate (By similarity).</text>
</comment>
<comment type="interaction">
    <interactant intactId="EBI-1057190">
        <id>Q7Z6J4</id>
    </interactant>
    <interactant intactId="EBI-740929">
        <id>Q53G59</id>
        <label>KLHL12</label>
    </interactant>
    <organismsDiffer>false</organismsDiffer>
    <experiments>3</experiments>
</comment>
<comment type="interaction">
    <interactant intactId="EBI-1057190">
        <id>Q7Z6J4</id>
    </interactant>
    <interactant intactId="EBI-949255">
        <id>Q58EX7</id>
        <label>PLEKHG4</label>
    </interactant>
    <organismsDiffer>false</organismsDiffer>
    <experiments>3</experiments>
</comment>
<comment type="interaction">
    <interactant intactId="EBI-1057190">
        <id>Q7Z6J4</id>
    </interactant>
    <interactant intactId="EBI-1052363">
        <id>Q9NS64</id>
        <label>RPRM</label>
    </interactant>
    <organismsDiffer>false</organismsDiffer>
    <experiments>3</experiments>
</comment>
<comment type="interaction">
    <interactant intactId="EBI-1057190">
        <id>Q7Z6J4</id>
    </interactant>
    <interactant intactId="EBI-9675724">
        <id>Q8WW34</id>
        <label>TMEM239</label>
    </interactant>
    <organismsDiffer>false</organismsDiffer>
    <experiments>3</experiments>
</comment>
<comment type="subcellular location">
    <subcellularLocation>
        <location evidence="10">Cytoplasm</location>
        <location evidence="10">Cytoskeleton</location>
    </subcellularLocation>
    <subcellularLocation>
        <location evidence="1">Cytoplasm</location>
    </subcellularLocation>
    <subcellularLocation>
        <location evidence="1">Nucleus</location>
    </subcellularLocation>
    <subcellularLocation>
        <location evidence="1">Early endosome</location>
    </subcellularLocation>
    <subcellularLocation>
        <location evidence="1">Early endosome membrane</location>
    </subcellularLocation>
    <subcellularLocation>
        <location evidence="1">Cell projection</location>
        <location evidence="1">Ruffle membrane</location>
    </subcellularLocation>
    <text evidence="1">Recruitment to the endosome and ruffle membrane requires the presence of phosphoinositides.</text>
</comment>
<comment type="alternative products">
    <event type="alternative splicing"/>
    <isoform>
        <id>Q7Z6J4-1</id>
        <name>1</name>
        <sequence type="displayed"/>
    </isoform>
    <isoform>
        <id>Q7Z6J4-2</id>
        <name>2</name>
        <sequence type="described" ref="VSP_013065 VSP_013070 VSP_013072"/>
    </isoform>
    <isoform>
        <id>Q7Z6J4-4</id>
        <name>3</name>
        <sequence type="described" ref="VSP_013066 VSP_013071"/>
    </isoform>
    <isoform>
        <id>Q7Z6J4-5</id>
        <name>4</name>
        <sequence type="described" ref="VSP_013067 VSP_013068 VSP_038219"/>
    </isoform>
</comment>
<comment type="domain">
    <text evidence="1">The FYVE-type zinc-finger is necessary for early endosome localization. Recruitment to endosomal membranes via this domain requires the presence of phosphatidylinositol 3-phosphate or other phosphatidylinositides (By similarity).</text>
</comment>
<comment type="domain">
    <text evidence="1">The PH domain is necessary for localization to the ruffle membrane. Recruitment to ruffle membrane occurs through binding of phosphoinositides by the PH domain. This domain also contributes to the lipid-binding properties of the protein (By similarity).</text>
</comment>
<comment type="domain">
    <text evidence="1">The DH domain is necessary for its ability to activate JNK1 via CDC42.</text>
</comment>
<comment type="miscellaneous">
    <molecule>Isoform 4</molecule>
    <text evidence="10">May be due to an intron retention.</text>
</comment>
<comment type="sequence caution" evidence="10">
    <conflict type="erroneous initiation">
        <sequence resource="EMBL-CDS" id="BAB15746"/>
    </conflict>
</comment>
<comment type="sequence caution" evidence="10">
    <conflict type="erroneous initiation">
        <sequence resource="EMBL-CDS" id="BAC85129"/>
    </conflict>
    <text>Extended N-terminus.</text>
</comment>
<comment type="sequence caution" evidence="10">
    <conflict type="frameshift">
        <sequence resource="EMBL-CDS" id="BAC85129"/>
    </conflict>
</comment>
<keyword id="KW-0025">Alternative splicing</keyword>
<keyword id="KW-1003">Cell membrane</keyword>
<keyword id="KW-0966">Cell projection</keyword>
<keyword id="KW-0963">Cytoplasm</keyword>
<keyword id="KW-0206">Cytoskeleton</keyword>
<keyword id="KW-0967">Endosome</keyword>
<keyword id="KW-0344">Guanine-nucleotide releasing factor</keyword>
<keyword id="KW-0472">Membrane</keyword>
<keyword id="KW-0479">Metal-binding</keyword>
<keyword id="KW-0539">Nucleus</keyword>
<keyword id="KW-0597">Phosphoprotein</keyword>
<keyword id="KW-1267">Proteomics identification</keyword>
<keyword id="KW-1185">Reference proteome</keyword>
<keyword id="KW-0677">Repeat</keyword>
<keyword id="KW-0862">Zinc</keyword>
<keyword id="KW-0863">Zinc-finger</keyword>
<dbReference type="EMBL" id="AK024456">
    <property type="protein sequence ID" value="BAB15746.1"/>
    <property type="status" value="ALT_INIT"/>
    <property type="molecule type" value="mRNA"/>
</dbReference>
<dbReference type="EMBL" id="AK097230">
    <property type="protein sequence ID" value="BAC04982.1"/>
    <property type="molecule type" value="mRNA"/>
</dbReference>
<dbReference type="EMBL" id="AK131079">
    <property type="protein sequence ID" value="BAC85129.1"/>
    <property type="status" value="ALT_SEQ"/>
    <property type="molecule type" value="mRNA"/>
</dbReference>
<dbReference type="EMBL" id="AL160264">
    <property type="status" value="NOT_ANNOTATED_CDS"/>
    <property type="molecule type" value="Genomic_DNA"/>
</dbReference>
<dbReference type="EMBL" id="BC023645">
    <property type="protein sequence ID" value="AAH23645.1"/>
    <property type="molecule type" value="mRNA"/>
</dbReference>
<dbReference type="EMBL" id="BC053655">
    <property type="protein sequence ID" value="AAH53655.1"/>
    <property type="molecule type" value="mRNA"/>
</dbReference>
<dbReference type="CCDS" id="CCDS4829.1">
    <molecule id="Q7Z6J4-1"/>
</dbReference>
<dbReference type="RefSeq" id="NP_775829.2">
    <molecule id="Q7Z6J4-1"/>
    <property type="nucleotide sequence ID" value="NM_173558.4"/>
</dbReference>
<dbReference type="SMR" id="Q7Z6J4"/>
<dbReference type="BioGRID" id="128730">
    <property type="interactions" value="26"/>
</dbReference>
<dbReference type="FunCoup" id="Q7Z6J4">
    <property type="interactions" value="214"/>
</dbReference>
<dbReference type="IntAct" id="Q7Z6J4">
    <property type="interactions" value="11"/>
</dbReference>
<dbReference type="STRING" id="9606.ENSP00000274963"/>
<dbReference type="GlyGen" id="Q7Z6J4">
    <property type="glycosylation" value="2 sites"/>
</dbReference>
<dbReference type="iPTMnet" id="Q7Z6J4"/>
<dbReference type="PhosphoSitePlus" id="Q7Z6J4"/>
<dbReference type="BioMuta" id="FGD2"/>
<dbReference type="DMDM" id="61213572"/>
<dbReference type="jPOST" id="Q7Z6J4"/>
<dbReference type="MassIVE" id="Q7Z6J4"/>
<dbReference type="PaxDb" id="9606-ENSP00000274963"/>
<dbReference type="PeptideAtlas" id="Q7Z6J4"/>
<dbReference type="ProteomicsDB" id="69421">
    <molecule id="Q7Z6J4-1"/>
</dbReference>
<dbReference type="ProteomicsDB" id="69422">
    <molecule id="Q7Z6J4-2"/>
</dbReference>
<dbReference type="ProteomicsDB" id="69423">
    <molecule id="Q7Z6J4-4"/>
</dbReference>
<dbReference type="ProteomicsDB" id="69424">
    <molecule id="Q7Z6J4-5"/>
</dbReference>
<dbReference type="Antibodypedia" id="29766">
    <property type="antibodies" value="61 antibodies from 16 providers"/>
</dbReference>
<dbReference type="DNASU" id="221472"/>
<dbReference type="Ensembl" id="ENST00000274963.13">
    <molecule id="Q7Z6J4-1"/>
    <property type="protein sequence ID" value="ENSP00000274963.8"/>
    <property type="gene ID" value="ENSG00000146192.16"/>
</dbReference>
<dbReference type="Ensembl" id="ENST00000718346.1">
    <molecule id="Q7Z6J4-1"/>
    <property type="protein sequence ID" value="ENSP00000520783.1"/>
    <property type="gene ID" value="ENSG00000146192.16"/>
</dbReference>
<dbReference type="GeneID" id="221472"/>
<dbReference type="KEGG" id="hsa:221472"/>
<dbReference type="MANE-Select" id="ENST00000274963.13">
    <property type="protein sequence ID" value="ENSP00000274963.8"/>
    <property type="RefSeq nucleotide sequence ID" value="NM_173558.4"/>
    <property type="RefSeq protein sequence ID" value="NP_775829.2"/>
</dbReference>
<dbReference type="UCSC" id="uc010jwp.2">
    <molecule id="Q7Z6J4-1"/>
    <property type="organism name" value="human"/>
</dbReference>
<dbReference type="AGR" id="HGNC:3664"/>
<dbReference type="CTD" id="221472"/>
<dbReference type="DisGeNET" id="221472"/>
<dbReference type="GeneCards" id="FGD2"/>
<dbReference type="HGNC" id="HGNC:3664">
    <property type="gene designation" value="FGD2"/>
</dbReference>
<dbReference type="HPA" id="ENSG00000146192">
    <property type="expression patterns" value="Tissue enhanced (lymphoid)"/>
</dbReference>
<dbReference type="MalaCards" id="FGD2"/>
<dbReference type="MIM" id="605091">
    <property type="type" value="gene"/>
</dbReference>
<dbReference type="neXtProt" id="NX_Q7Z6J4"/>
<dbReference type="OpenTargets" id="ENSG00000146192"/>
<dbReference type="PharmGKB" id="PA28103"/>
<dbReference type="VEuPathDB" id="HostDB:ENSG00000146192"/>
<dbReference type="eggNOG" id="KOG4424">
    <property type="taxonomic scope" value="Eukaryota"/>
</dbReference>
<dbReference type="GeneTree" id="ENSGT00940000161251"/>
<dbReference type="HOGENOM" id="CLU_011755_2_1_1"/>
<dbReference type="InParanoid" id="Q7Z6J4"/>
<dbReference type="OMA" id="WTEKCPP"/>
<dbReference type="OrthoDB" id="660555at2759"/>
<dbReference type="PAN-GO" id="Q7Z6J4">
    <property type="GO annotations" value="3 GO annotations based on evolutionary models"/>
</dbReference>
<dbReference type="PhylomeDB" id="Q7Z6J4"/>
<dbReference type="TreeFam" id="TF316247"/>
<dbReference type="PathwayCommons" id="Q7Z6J4"/>
<dbReference type="Reactome" id="R-HSA-193648">
    <property type="pathway name" value="NRAGE signals death through JNK"/>
</dbReference>
<dbReference type="Reactome" id="R-HSA-416482">
    <property type="pathway name" value="G alpha (12/13) signalling events"/>
</dbReference>
<dbReference type="Reactome" id="R-HSA-9013148">
    <property type="pathway name" value="CDC42 GTPase cycle"/>
</dbReference>
<dbReference type="SignaLink" id="Q7Z6J4"/>
<dbReference type="SIGNOR" id="Q7Z6J4"/>
<dbReference type="BioGRID-ORCS" id="221472">
    <property type="hits" value="10 hits in 1146 CRISPR screens"/>
</dbReference>
<dbReference type="ChiTaRS" id="FGD2">
    <property type="organism name" value="human"/>
</dbReference>
<dbReference type="GeneWiki" id="FGD2"/>
<dbReference type="GenomeRNAi" id="221472"/>
<dbReference type="Pharos" id="Q7Z6J4">
    <property type="development level" value="Tdark"/>
</dbReference>
<dbReference type="PRO" id="PR:Q7Z6J4"/>
<dbReference type="Proteomes" id="UP000005640">
    <property type="component" value="Chromosome 6"/>
</dbReference>
<dbReference type="RNAct" id="Q7Z6J4">
    <property type="molecule type" value="protein"/>
</dbReference>
<dbReference type="Bgee" id="ENSG00000146192">
    <property type="expression patterns" value="Expressed in monocyte and 179 other cell types or tissues"/>
</dbReference>
<dbReference type="ExpressionAtlas" id="Q7Z6J4">
    <property type="expression patterns" value="baseline and differential"/>
</dbReference>
<dbReference type="GO" id="GO:0005737">
    <property type="term" value="C:cytoplasm"/>
    <property type="evidence" value="ECO:0000250"/>
    <property type="project" value="UniProtKB"/>
</dbReference>
<dbReference type="GO" id="GO:0005856">
    <property type="term" value="C:cytoskeleton"/>
    <property type="evidence" value="ECO:0007669"/>
    <property type="project" value="UniProtKB-SubCell"/>
</dbReference>
<dbReference type="GO" id="GO:0005829">
    <property type="term" value="C:cytosol"/>
    <property type="evidence" value="ECO:0000304"/>
    <property type="project" value="Reactome"/>
</dbReference>
<dbReference type="GO" id="GO:0031901">
    <property type="term" value="C:early endosome membrane"/>
    <property type="evidence" value="ECO:0007669"/>
    <property type="project" value="UniProtKB-SubCell"/>
</dbReference>
<dbReference type="GO" id="GO:0005794">
    <property type="term" value="C:Golgi apparatus"/>
    <property type="evidence" value="ECO:0000250"/>
    <property type="project" value="UniProtKB"/>
</dbReference>
<dbReference type="GO" id="GO:0030027">
    <property type="term" value="C:lamellipodium"/>
    <property type="evidence" value="ECO:0000250"/>
    <property type="project" value="UniProtKB"/>
</dbReference>
<dbReference type="GO" id="GO:0005634">
    <property type="term" value="C:nucleus"/>
    <property type="evidence" value="ECO:0007669"/>
    <property type="project" value="UniProtKB-SubCell"/>
</dbReference>
<dbReference type="GO" id="GO:0001726">
    <property type="term" value="C:ruffle"/>
    <property type="evidence" value="ECO:0000250"/>
    <property type="project" value="UniProtKB"/>
</dbReference>
<dbReference type="GO" id="GO:0032587">
    <property type="term" value="C:ruffle membrane"/>
    <property type="evidence" value="ECO:0007669"/>
    <property type="project" value="UniProtKB-SubCell"/>
</dbReference>
<dbReference type="GO" id="GO:0005085">
    <property type="term" value="F:guanyl-nucleotide exchange factor activity"/>
    <property type="evidence" value="ECO:0000250"/>
    <property type="project" value="UniProtKB"/>
</dbReference>
<dbReference type="GO" id="GO:1901981">
    <property type="term" value="F:phosphatidylinositol phosphate binding"/>
    <property type="evidence" value="ECO:0007669"/>
    <property type="project" value="Ensembl"/>
</dbReference>
<dbReference type="GO" id="GO:0031267">
    <property type="term" value="F:small GTPase binding"/>
    <property type="evidence" value="ECO:0000250"/>
    <property type="project" value="UniProtKB"/>
</dbReference>
<dbReference type="GO" id="GO:0008270">
    <property type="term" value="F:zinc ion binding"/>
    <property type="evidence" value="ECO:0007669"/>
    <property type="project" value="UniProtKB-KW"/>
</dbReference>
<dbReference type="GO" id="GO:0030036">
    <property type="term" value="P:actin cytoskeleton organization"/>
    <property type="evidence" value="ECO:0000250"/>
    <property type="project" value="UniProtKB"/>
</dbReference>
<dbReference type="GO" id="GO:0007010">
    <property type="term" value="P:cytoskeleton organization"/>
    <property type="evidence" value="ECO:0000250"/>
    <property type="project" value="UniProtKB"/>
</dbReference>
<dbReference type="GO" id="GO:0046847">
    <property type="term" value="P:filopodium assembly"/>
    <property type="evidence" value="ECO:0000250"/>
    <property type="project" value="UniProtKB"/>
</dbReference>
<dbReference type="GO" id="GO:0008360">
    <property type="term" value="P:regulation of cell shape"/>
    <property type="evidence" value="ECO:0000250"/>
    <property type="project" value="UniProtKB"/>
</dbReference>
<dbReference type="GO" id="GO:0043087">
    <property type="term" value="P:regulation of GTPase activity"/>
    <property type="evidence" value="ECO:0000250"/>
    <property type="project" value="UniProtKB"/>
</dbReference>
<dbReference type="GO" id="GO:0051056">
    <property type="term" value="P:regulation of small GTPase mediated signal transduction"/>
    <property type="evidence" value="ECO:0000304"/>
    <property type="project" value="Reactome"/>
</dbReference>
<dbReference type="CDD" id="cd15741">
    <property type="entry name" value="FYVE_FGD1_2_4"/>
    <property type="match status" value="1"/>
</dbReference>
<dbReference type="CDD" id="cd13386">
    <property type="entry name" value="PH1_FGD2"/>
    <property type="match status" value="1"/>
</dbReference>
<dbReference type="CDD" id="cd13236">
    <property type="entry name" value="PH2_FGD1-4"/>
    <property type="match status" value="1"/>
</dbReference>
<dbReference type="CDD" id="cd00160">
    <property type="entry name" value="RhoGEF"/>
    <property type="match status" value="1"/>
</dbReference>
<dbReference type="FunFam" id="3.30.40.10:FF:000061">
    <property type="entry name" value="FYVE, RhoGEF and PH domain containing 1"/>
    <property type="match status" value="1"/>
</dbReference>
<dbReference type="FunFam" id="1.20.900.10:FF:000013">
    <property type="entry name" value="FYVE, RhoGEF and PH domain-containing protein 4"/>
    <property type="match status" value="1"/>
</dbReference>
<dbReference type="FunFam" id="2.30.29.30:FF:000102">
    <property type="entry name" value="FYVE, RhoGEF and PH domain-containing protein 4"/>
    <property type="match status" value="1"/>
</dbReference>
<dbReference type="FunFam" id="2.30.29.30:FF:000113">
    <property type="entry name" value="FYVE, RhoGEF and PH domain-containing protein 4"/>
    <property type="match status" value="1"/>
</dbReference>
<dbReference type="Gene3D" id="1.20.900.10">
    <property type="entry name" value="Dbl homology (DH) domain"/>
    <property type="match status" value="1"/>
</dbReference>
<dbReference type="Gene3D" id="2.30.29.30">
    <property type="entry name" value="Pleckstrin-homology domain (PH domain)/Phosphotyrosine-binding domain (PTB)"/>
    <property type="match status" value="2"/>
</dbReference>
<dbReference type="Gene3D" id="3.30.40.10">
    <property type="entry name" value="Zinc/RING finger domain, C3HC4 (zinc finger)"/>
    <property type="match status" value="1"/>
</dbReference>
<dbReference type="InterPro" id="IPR035899">
    <property type="entry name" value="DBL_dom_sf"/>
</dbReference>
<dbReference type="InterPro" id="IPR000219">
    <property type="entry name" value="DH_dom"/>
</dbReference>
<dbReference type="InterPro" id="IPR035941">
    <property type="entry name" value="FGD1-4_PH2"/>
</dbReference>
<dbReference type="InterPro" id="IPR037797">
    <property type="entry name" value="FGD2_PH1"/>
</dbReference>
<dbReference type="InterPro" id="IPR051092">
    <property type="entry name" value="FYVE_RhoGEF_PH"/>
</dbReference>
<dbReference type="InterPro" id="IPR011993">
    <property type="entry name" value="PH-like_dom_sf"/>
</dbReference>
<dbReference type="InterPro" id="IPR001849">
    <property type="entry name" value="PH_domain"/>
</dbReference>
<dbReference type="InterPro" id="IPR055251">
    <property type="entry name" value="SOS1_NGEF_PH"/>
</dbReference>
<dbReference type="InterPro" id="IPR000306">
    <property type="entry name" value="Znf_FYVE"/>
</dbReference>
<dbReference type="InterPro" id="IPR017455">
    <property type="entry name" value="Znf_FYVE-rel"/>
</dbReference>
<dbReference type="InterPro" id="IPR011011">
    <property type="entry name" value="Znf_FYVE_PHD"/>
</dbReference>
<dbReference type="InterPro" id="IPR013083">
    <property type="entry name" value="Znf_RING/FYVE/PHD"/>
</dbReference>
<dbReference type="PANTHER" id="PTHR12673">
    <property type="entry name" value="FACIOGENITAL DYSPLASIA PROTEIN"/>
    <property type="match status" value="1"/>
</dbReference>
<dbReference type="PANTHER" id="PTHR12673:SF82">
    <property type="entry name" value="FYVE, RHOGEF AND PH DOMAIN-CONTAINING PROTEIN 2"/>
    <property type="match status" value="1"/>
</dbReference>
<dbReference type="Pfam" id="PF01363">
    <property type="entry name" value="FYVE"/>
    <property type="match status" value="1"/>
</dbReference>
<dbReference type="Pfam" id="PF00169">
    <property type="entry name" value="PH"/>
    <property type="match status" value="1"/>
</dbReference>
<dbReference type="Pfam" id="PF00621">
    <property type="entry name" value="RhoGEF"/>
    <property type="match status" value="1"/>
</dbReference>
<dbReference type="Pfam" id="PF22697">
    <property type="entry name" value="SOS1_NGEF_PH"/>
    <property type="match status" value="1"/>
</dbReference>
<dbReference type="SMART" id="SM00064">
    <property type="entry name" value="FYVE"/>
    <property type="match status" value="1"/>
</dbReference>
<dbReference type="SMART" id="SM00233">
    <property type="entry name" value="PH"/>
    <property type="match status" value="2"/>
</dbReference>
<dbReference type="SMART" id="SM00325">
    <property type="entry name" value="RhoGEF"/>
    <property type="match status" value="1"/>
</dbReference>
<dbReference type="SUPFAM" id="SSF48065">
    <property type="entry name" value="DBL homology domain (DH-domain)"/>
    <property type="match status" value="1"/>
</dbReference>
<dbReference type="SUPFAM" id="SSF57903">
    <property type="entry name" value="FYVE/PHD zinc finger"/>
    <property type="match status" value="1"/>
</dbReference>
<dbReference type="SUPFAM" id="SSF50729">
    <property type="entry name" value="PH domain-like"/>
    <property type="match status" value="2"/>
</dbReference>
<dbReference type="PROSITE" id="PS50010">
    <property type="entry name" value="DH_2"/>
    <property type="match status" value="1"/>
</dbReference>
<dbReference type="PROSITE" id="PS50003">
    <property type="entry name" value="PH_DOMAIN"/>
    <property type="match status" value="2"/>
</dbReference>
<dbReference type="PROSITE" id="PS50178">
    <property type="entry name" value="ZF_FYVE"/>
    <property type="match status" value="1"/>
</dbReference>
<organism>
    <name type="scientific">Homo sapiens</name>
    <name type="common">Human</name>
    <dbReference type="NCBI Taxonomy" id="9606"/>
    <lineage>
        <taxon>Eukaryota</taxon>
        <taxon>Metazoa</taxon>
        <taxon>Chordata</taxon>
        <taxon>Craniata</taxon>
        <taxon>Vertebrata</taxon>
        <taxon>Euteleostomi</taxon>
        <taxon>Mammalia</taxon>
        <taxon>Eutheria</taxon>
        <taxon>Euarchontoglires</taxon>
        <taxon>Primates</taxon>
        <taxon>Haplorrhini</taxon>
        <taxon>Catarrhini</taxon>
        <taxon>Hominidae</taxon>
        <taxon>Homo</taxon>
    </lineage>
</organism>
<gene>
    <name type="primary">FGD2</name>
    <name type="synonym">ZFYVE4</name>
</gene>
<proteinExistence type="evidence at protein level"/>
<reference key="1">
    <citation type="journal article" date="2000" name="DNA Res.">
        <title>Characterization of long cDNA clones from human adult spleen.</title>
        <authorList>
            <person name="Hattori A."/>
            <person name="Okumura K."/>
            <person name="Nagase T."/>
            <person name="Kikuno R."/>
            <person name="Hirosawa M."/>
            <person name="Ohara O."/>
        </authorList>
    </citation>
    <scope>NUCLEOTIDE SEQUENCE [LARGE SCALE MRNA] (ISOFORM 4)</scope>
    <source>
        <tissue>Spleen</tissue>
    </source>
</reference>
<reference key="2">
    <citation type="journal article" date="2004" name="Nat. Genet.">
        <title>Complete sequencing and characterization of 21,243 full-length human cDNAs.</title>
        <authorList>
            <person name="Ota T."/>
            <person name="Suzuki Y."/>
            <person name="Nishikawa T."/>
            <person name="Otsuki T."/>
            <person name="Sugiyama T."/>
            <person name="Irie R."/>
            <person name="Wakamatsu A."/>
            <person name="Hayashi K."/>
            <person name="Sato H."/>
            <person name="Nagai K."/>
            <person name="Kimura K."/>
            <person name="Makita H."/>
            <person name="Sekine M."/>
            <person name="Obayashi M."/>
            <person name="Nishi T."/>
            <person name="Shibahara T."/>
            <person name="Tanaka T."/>
            <person name="Ishii S."/>
            <person name="Yamamoto J."/>
            <person name="Saito K."/>
            <person name="Kawai Y."/>
            <person name="Isono Y."/>
            <person name="Nakamura Y."/>
            <person name="Nagahari K."/>
            <person name="Murakami K."/>
            <person name="Yasuda T."/>
            <person name="Iwayanagi T."/>
            <person name="Wagatsuma M."/>
            <person name="Shiratori A."/>
            <person name="Sudo H."/>
            <person name="Hosoiri T."/>
            <person name="Kaku Y."/>
            <person name="Kodaira H."/>
            <person name="Kondo H."/>
            <person name="Sugawara M."/>
            <person name="Takahashi M."/>
            <person name="Kanda K."/>
            <person name="Yokoi T."/>
            <person name="Furuya T."/>
            <person name="Kikkawa E."/>
            <person name="Omura Y."/>
            <person name="Abe K."/>
            <person name="Kamihara K."/>
            <person name="Katsuta N."/>
            <person name="Sato K."/>
            <person name="Tanikawa M."/>
            <person name="Yamazaki M."/>
            <person name="Ninomiya K."/>
            <person name="Ishibashi T."/>
            <person name="Yamashita H."/>
            <person name="Murakawa K."/>
            <person name="Fujimori K."/>
            <person name="Tanai H."/>
            <person name="Kimata M."/>
            <person name="Watanabe M."/>
            <person name="Hiraoka S."/>
            <person name="Chiba Y."/>
            <person name="Ishida S."/>
            <person name="Ono Y."/>
            <person name="Takiguchi S."/>
            <person name="Watanabe S."/>
            <person name="Yosida M."/>
            <person name="Hotuta T."/>
            <person name="Kusano J."/>
            <person name="Kanehori K."/>
            <person name="Takahashi-Fujii A."/>
            <person name="Hara H."/>
            <person name="Tanase T.-O."/>
            <person name="Nomura Y."/>
            <person name="Togiya S."/>
            <person name="Komai F."/>
            <person name="Hara R."/>
            <person name="Takeuchi K."/>
            <person name="Arita M."/>
            <person name="Imose N."/>
            <person name="Musashino K."/>
            <person name="Yuuki H."/>
            <person name="Oshima A."/>
            <person name="Sasaki N."/>
            <person name="Aotsuka S."/>
            <person name="Yoshikawa Y."/>
            <person name="Matsunawa H."/>
            <person name="Ichihara T."/>
            <person name="Shiohata N."/>
            <person name="Sano S."/>
            <person name="Moriya S."/>
            <person name="Momiyama H."/>
            <person name="Satoh N."/>
            <person name="Takami S."/>
            <person name="Terashima Y."/>
            <person name="Suzuki O."/>
            <person name="Nakagawa S."/>
            <person name="Senoh A."/>
            <person name="Mizoguchi H."/>
            <person name="Goto Y."/>
            <person name="Shimizu F."/>
            <person name="Wakebe H."/>
            <person name="Hishigaki H."/>
            <person name="Watanabe T."/>
            <person name="Sugiyama A."/>
            <person name="Takemoto M."/>
            <person name="Kawakami B."/>
            <person name="Yamazaki M."/>
            <person name="Watanabe K."/>
            <person name="Kumagai A."/>
            <person name="Itakura S."/>
            <person name="Fukuzumi Y."/>
            <person name="Fujimori Y."/>
            <person name="Komiyama M."/>
            <person name="Tashiro H."/>
            <person name="Tanigami A."/>
            <person name="Fujiwara T."/>
            <person name="Ono T."/>
            <person name="Yamada K."/>
            <person name="Fujii Y."/>
            <person name="Ozaki K."/>
            <person name="Hirao M."/>
            <person name="Ohmori Y."/>
            <person name="Kawabata A."/>
            <person name="Hikiji T."/>
            <person name="Kobatake N."/>
            <person name="Inagaki H."/>
            <person name="Ikema Y."/>
            <person name="Okamoto S."/>
            <person name="Okitani R."/>
            <person name="Kawakami T."/>
            <person name="Noguchi S."/>
            <person name="Itoh T."/>
            <person name="Shigeta K."/>
            <person name="Senba T."/>
            <person name="Matsumura K."/>
            <person name="Nakajima Y."/>
            <person name="Mizuno T."/>
            <person name="Morinaga M."/>
            <person name="Sasaki M."/>
            <person name="Togashi T."/>
            <person name="Oyama M."/>
            <person name="Hata H."/>
            <person name="Watanabe M."/>
            <person name="Komatsu T."/>
            <person name="Mizushima-Sugano J."/>
            <person name="Satoh T."/>
            <person name="Shirai Y."/>
            <person name="Takahashi Y."/>
            <person name="Nakagawa K."/>
            <person name="Okumura K."/>
            <person name="Nagase T."/>
            <person name="Nomura N."/>
            <person name="Kikuchi H."/>
            <person name="Masuho Y."/>
            <person name="Yamashita R."/>
            <person name="Nakai K."/>
            <person name="Yada T."/>
            <person name="Nakamura Y."/>
            <person name="Ohara O."/>
            <person name="Isogai T."/>
            <person name="Sugano S."/>
        </authorList>
    </citation>
    <scope>NUCLEOTIDE SEQUENCE [LARGE SCALE MRNA] (ISOFORMS 2 AND 3)</scope>
    <source>
        <tissue>Spleen</tissue>
    </source>
</reference>
<reference key="3">
    <citation type="journal article" date="2003" name="Nature">
        <title>The DNA sequence and analysis of human chromosome 6.</title>
        <authorList>
            <person name="Mungall A.J."/>
            <person name="Palmer S.A."/>
            <person name="Sims S.K."/>
            <person name="Edwards C.A."/>
            <person name="Ashurst J.L."/>
            <person name="Wilming L."/>
            <person name="Jones M.C."/>
            <person name="Horton R."/>
            <person name="Hunt S.E."/>
            <person name="Scott C.E."/>
            <person name="Gilbert J.G.R."/>
            <person name="Clamp M.E."/>
            <person name="Bethel G."/>
            <person name="Milne S."/>
            <person name="Ainscough R."/>
            <person name="Almeida J.P."/>
            <person name="Ambrose K.D."/>
            <person name="Andrews T.D."/>
            <person name="Ashwell R.I.S."/>
            <person name="Babbage A.K."/>
            <person name="Bagguley C.L."/>
            <person name="Bailey J."/>
            <person name="Banerjee R."/>
            <person name="Barker D.J."/>
            <person name="Barlow K.F."/>
            <person name="Bates K."/>
            <person name="Beare D.M."/>
            <person name="Beasley H."/>
            <person name="Beasley O."/>
            <person name="Bird C.P."/>
            <person name="Blakey S.E."/>
            <person name="Bray-Allen S."/>
            <person name="Brook J."/>
            <person name="Brown A.J."/>
            <person name="Brown J.Y."/>
            <person name="Burford D.C."/>
            <person name="Burrill W."/>
            <person name="Burton J."/>
            <person name="Carder C."/>
            <person name="Carter N.P."/>
            <person name="Chapman J.C."/>
            <person name="Clark S.Y."/>
            <person name="Clark G."/>
            <person name="Clee C.M."/>
            <person name="Clegg S."/>
            <person name="Cobley V."/>
            <person name="Collier R.E."/>
            <person name="Collins J.E."/>
            <person name="Colman L.K."/>
            <person name="Corby N.R."/>
            <person name="Coville G.J."/>
            <person name="Culley K.M."/>
            <person name="Dhami P."/>
            <person name="Davies J."/>
            <person name="Dunn M."/>
            <person name="Earthrowl M.E."/>
            <person name="Ellington A.E."/>
            <person name="Evans K.A."/>
            <person name="Faulkner L."/>
            <person name="Francis M.D."/>
            <person name="Frankish A."/>
            <person name="Frankland J."/>
            <person name="French L."/>
            <person name="Garner P."/>
            <person name="Garnett J."/>
            <person name="Ghori M.J."/>
            <person name="Gilby L.M."/>
            <person name="Gillson C.J."/>
            <person name="Glithero R.J."/>
            <person name="Grafham D.V."/>
            <person name="Grant M."/>
            <person name="Gribble S."/>
            <person name="Griffiths C."/>
            <person name="Griffiths M.N.D."/>
            <person name="Hall R."/>
            <person name="Halls K.S."/>
            <person name="Hammond S."/>
            <person name="Harley J.L."/>
            <person name="Hart E.A."/>
            <person name="Heath P.D."/>
            <person name="Heathcott R."/>
            <person name="Holmes S.J."/>
            <person name="Howden P.J."/>
            <person name="Howe K.L."/>
            <person name="Howell G.R."/>
            <person name="Huckle E."/>
            <person name="Humphray S.J."/>
            <person name="Humphries M.D."/>
            <person name="Hunt A.R."/>
            <person name="Johnson C.M."/>
            <person name="Joy A.A."/>
            <person name="Kay M."/>
            <person name="Keenan S.J."/>
            <person name="Kimberley A.M."/>
            <person name="King A."/>
            <person name="Laird G.K."/>
            <person name="Langford C."/>
            <person name="Lawlor S."/>
            <person name="Leongamornlert D.A."/>
            <person name="Leversha M."/>
            <person name="Lloyd C.R."/>
            <person name="Lloyd D.M."/>
            <person name="Loveland J.E."/>
            <person name="Lovell J."/>
            <person name="Martin S."/>
            <person name="Mashreghi-Mohammadi M."/>
            <person name="Maslen G.L."/>
            <person name="Matthews L."/>
            <person name="McCann O.T."/>
            <person name="McLaren S.J."/>
            <person name="McLay K."/>
            <person name="McMurray A."/>
            <person name="Moore M.J.F."/>
            <person name="Mullikin J.C."/>
            <person name="Niblett D."/>
            <person name="Nickerson T."/>
            <person name="Novik K.L."/>
            <person name="Oliver K."/>
            <person name="Overton-Larty E.K."/>
            <person name="Parker A."/>
            <person name="Patel R."/>
            <person name="Pearce A.V."/>
            <person name="Peck A.I."/>
            <person name="Phillimore B.J.C.T."/>
            <person name="Phillips S."/>
            <person name="Plumb R.W."/>
            <person name="Porter K.M."/>
            <person name="Ramsey Y."/>
            <person name="Ranby S.A."/>
            <person name="Rice C.M."/>
            <person name="Ross M.T."/>
            <person name="Searle S.M."/>
            <person name="Sehra H.K."/>
            <person name="Sheridan E."/>
            <person name="Skuce C.D."/>
            <person name="Smith S."/>
            <person name="Smith M."/>
            <person name="Spraggon L."/>
            <person name="Squares S.L."/>
            <person name="Steward C.A."/>
            <person name="Sycamore N."/>
            <person name="Tamlyn-Hall G."/>
            <person name="Tester J."/>
            <person name="Theaker A.J."/>
            <person name="Thomas D.W."/>
            <person name="Thorpe A."/>
            <person name="Tracey A."/>
            <person name="Tromans A."/>
            <person name="Tubby B."/>
            <person name="Wall M."/>
            <person name="Wallis J.M."/>
            <person name="West A.P."/>
            <person name="White S.S."/>
            <person name="Whitehead S.L."/>
            <person name="Whittaker H."/>
            <person name="Wild A."/>
            <person name="Willey D.J."/>
            <person name="Wilmer T.E."/>
            <person name="Wood J.M."/>
            <person name="Wray P.W."/>
            <person name="Wyatt J.C."/>
            <person name="Young L."/>
            <person name="Younger R.M."/>
            <person name="Bentley D.R."/>
            <person name="Coulson A."/>
            <person name="Durbin R.M."/>
            <person name="Hubbard T."/>
            <person name="Sulston J.E."/>
            <person name="Dunham I."/>
            <person name="Rogers J."/>
            <person name="Beck S."/>
        </authorList>
    </citation>
    <scope>NUCLEOTIDE SEQUENCE [LARGE SCALE GENOMIC DNA]</scope>
</reference>
<reference key="4">
    <citation type="journal article" date="2004" name="Genome Res.">
        <title>The status, quality, and expansion of the NIH full-length cDNA project: the Mammalian Gene Collection (MGC).</title>
        <authorList>
            <consortium name="The MGC Project Team"/>
        </authorList>
    </citation>
    <scope>NUCLEOTIDE SEQUENCE [LARGE SCALE MRNA] (ISOFORM 1)</scope>
    <scope>VARIANT HIS-32</scope>
    <source>
        <tissue>Leukocyte</tissue>
        <tissue>Lymph</tissue>
    </source>
</reference>
<reference key="5">
    <citation type="journal article" date="2014" name="J. Proteomics">
        <title>An enzyme assisted RP-RPLC approach for in-depth analysis of human liver phosphoproteome.</title>
        <authorList>
            <person name="Bian Y."/>
            <person name="Song C."/>
            <person name="Cheng K."/>
            <person name="Dong M."/>
            <person name="Wang F."/>
            <person name="Huang J."/>
            <person name="Sun D."/>
            <person name="Wang L."/>
            <person name="Ye M."/>
            <person name="Zou H."/>
        </authorList>
    </citation>
    <scope>PHOSPHORYLATION [LARGE SCALE ANALYSIS] AT SER-654</scope>
    <scope>IDENTIFICATION BY MASS SPECTROMETRY [LARGE SCALE ANALYSIS]</scope>
    <source>
        <tissue>Liver</tissue>
    </source>
</reference>